<sequence length="533" mass="59751">MACTTILVGKDASYDGSTIIARNEDSANGEFNPKRFIVVKPEEQPREYKSVISHLTITLPDDPLQYTAVPNADLKEGIWGEAGVNEANVAMSATETLTTNERVLGADPFVEYTPAKGDEPEVPGGIGEEDFLTIVLPYVKTAREGVQRLGALLEEFGTYEMNGVAFSDSNEIWWLETVGGHHWIAKRVPDEAYVTMPNQLGIDEFDLEDALGDQEAHMCSEDLAEFIETNHLDLAVENTTPFNPRDAFGSHSDSDHVYNTPRAWYMQRFLNPYDEVWDGPDADHKPTSDDIPWARQPERKVTIEDIKYVLSSHYQGTPFDPYGQLGDERTRHMYRTIGINRQSQLAVMQIRPYRPQASRAIQWMAYGSNPFNTLVPFFPNVDTTPAYLEDTTTRVTSENFYWANRIIAALCDGAFRSTSNAVERYQEKTGAMGHRLVAATDEQIARLGLTAAEEAAQSAAEEEFEADNVDGDVQPMTPDETIAALRNPEVREILAAANQTMADQLKEETEKLLDSVLYTRSMEMKNGFHMSDF</sequence>
<protein>
    <recommendedName>
        <fullName evidence="3 5">Dipeptidase</fullName>
        <ecNumber evidence="2">3.4.13.19</ecNumber>
    </recommendedName>
</protein>
<organism>
    <name type="scientific">Bifidobacterium longum (strain NCC 2705)</name>
    <dbReference type="NCBI Taxonomy" id="206672"/>
    <lineage>
        <taxon>Bacteria</taxon>
        <taxon>Bacillati</taxon>
        <taxon>Actinomycetota</taxon>
        <taxon>Actinomycetes</taxon>
        <taxon>Bifidobacteriales</taxon>
        <taxon>Bifidobacteriaceae</taxon>
        <taxon>Bifidobacterium</taxon>
    </lineage>
</organism>
<comment type="function">
    <text evidence="2">Hydrolyzes a wide range of dipeptides. Highest activity against Ala-Gln.</text>
</comment>
<comment type="catalytic activity">
    <reaction evidence="2">
        <text>an L-aminoacyl-L-amino acid + H2O = 2 an L-alpha-amino acid</text>
        <dbReference type="Rhea" id="RHEA:48940"/>
        <dbReference type="ChEBI" id="CHEBI:15377"/>
        <dbReference type="ChEBI" id="CHEBI:59869"/>
        <dbReference type="ChEBI" id="CHEBI:77460"/>
        <dbReference type="EC" id="3.4.13.19"/>
    </reaction>
</comment>
<comment type="biophysicochemical properties">
    <phDependence>
        <text evidence="2">Optimum pH is 7.0-9.0 with Ala-Gln as substrate at 37 degrees Celsius. Activity is very low below pH 5.5 and at pH 10.0 is about 50% of the maximum.</text>
    </phDependence>
    <temperatureDependence>
        <text evidence="2">Optimum temperature is 50 degrees Celsius with Ala-Gln as substrate at pH 8.0. Activity is 30% of maximum at 20 degrees Celsius and 50% of maximum at 70 degrees Celsius. Stable when incubated for 10 minutes at temperatures of up to 70 degrees Celsius.</text>
    </temperatureDependence>
</comment>
<comment type="mass spectrometry" mass="49496.0" method="MALDI" evidence="2">
    <text>The measured mass is that of the post-translationally modified protein, but the nature of the post-translational modifications has not been determined.</text>
</comment>
<comment type="similarity">
    <text evidence="1">Belongs to the peptidase C69 family.</text>
</comment>
<feature type="chain" id="PRO_0000352778" description="Dipeptidase">
    <location>
        <begin position="1"/>
        <end position="533"/>
    </location>
</feature>
<feature type="active site" evidence="1">
    <location>
        <position position="3"/>
    </location>
</feature>
<accession>Q8G6Z9</accession>
<gene>
    <name evidence="3 5" type="primary">pepD</name>
    <name type="ordered locus">BL0479</name>
</gene>
<reference key="1">
    <citation type="journal article" date="2002" name="Proc. Natl. Acad. Sci. U.S.A.">
        <title>The genome sequence of Bifidobacterium longum reflects its adaptation to the human gastrointestinal tract.</title>
        <authorList>
            <person name="Schell M.A."/>
            <person name="Karmirantzou M."/>
            <person name="Snel B."/>
            <person name="Vilanova D."/>
            <person name="Berger B."/>
            <person name="Pessi G."/>
            <person name="Zwahlen M.-C."/>
            <person name="Desiere F."/>
            <person name="Bork P."/>
            <person name="Delley M."/>
            <person name="Pridmore R.D."/>
            <person name="Arigoni F."/>
        </authorList>
    </citation>
    <scope>NUCLEOTIDE SEQUENCE [LARGE SCALE GENOMIC DNA]</scope>
    <source>
        <strain>NCC 2705</strain>
    </source>
</reference>
<reference evidence="4" key="2">
    <citation type="journal article" date="2007" name="Appl. Environ. Microbiol.">
        <title>Characterization of a Bifidobacterium longum BORI dipeptidase belonging to the U34 family.</title>
        <authorList>
            <person name="Seo J.M."/>
            <person name="Ji G.E."/>
            <person name="Cho S.H."/>
            <person name="Park M.S."/>
            <person name="Lee H.J."/>
        </authorList>
    </citation>
    <scope>PROTEIN SEQUENCE OF 231-239 AND 395-405</scope>
    <scope>FUNCTION</scope>
    <scope>CATALYTIC ACTIVITY</scope>
    <scope>BIOPHYSICOCHEMICAL PROPERTIES</scope>
    <scope>MASS SPECTROMETRY</scope>
    <source>
        <strain evidence="2">BORI</strain>
    </source>
</reference>
<proteinExistence type="evidence at protein level"/>
<name>PEPD_BIFLO</name>
<dbReference type="EC" id="3.4.13.19" evidence="2"/>
<dbReference type="EMBL" id="AE014295">
    <property type="protein sequence ID" value="AAN24310.1"/>
    <property type="molecule type" value="Genomic_DNA"/>
</dbReference>
<dbReference type="RefSeq" id="NP_695674.1">
    <property type="nucleotide sequence ID" value="NC_004307.2"/>
</dbReference>
<dbReference type="RefSeq" id="WP_007051601.1">
    <property type="nucleotide sequence ID" value="NC_004307.2"/>
</dbReference>
<dbReference type="SMR" id="Q8G6Z9"/>
<dbReference type="STRING" id="206672.BL0479"/>
<dbReference type="MEROPS" id="C69.001"/>
<dbReference type="EnsemblBacteria" id="AAN24310">
    <property type="protein sequence ID" value="AAN24310"/>
    <property type="gene ID" value="BL0479"/>
</dbReference>
<dbReference type="KEGG" id="blo:BL0479"/>
<dbReference type="PATRIC" id="fig|206672.9.peg.1222"/>
<dbReference type="HOGENOM" id="CLU_014823_4_1_11"/>
<dbReference type="OrthoDB" id="9764088at2"/>
<dbReference type="PhylomeDB" id="Q8G6Z9"/>
<dbReference type="Proteomes" id="UP000000439">
    <property type="component" value="Chromosome"/>
</dbReference>
<dbReference type="GO" id="GO:0070004">
    <property type="term" value="F:cysteine-type exopeptidase activity"/>
    <property type="evidence" value="ECO:0007669"/>
    <property type="project" value="InterPro"/>
</dbReference>
<dbReference type="GO" id="GO:0016805">
    <property type="term" value="F:dipeptidase activity"/>
    <property type="evidence" value="ECO:0000314"/>
    <property type="project" value="UniProtKB"/>
</dbReference>
<dbReference type="GO" id="GO:0006508">
    <property type="term" value="P:proteolysis"/>
    <property type="evidence" value="ECO:0000314"/>
    <property type="project" value="UniProtKB"/>
</dbReference>
<dbReference type="FunFam" id="3.60.60.10:FF:000007">
    <property type="entry name" value="Dipeptidase"/>
    <property type="match status" value="1"/>
</dbReference>
<dbReference type="Gene3D" id="3.60.60.10">
    <property type="entry name" value="Penicillin V Acylase, Chain A"/>
    <property type="match status" value="1"/>
</dbReference>
<dbReference type="InterPro" id="IPR047804">
    <property type="entry name" value="C69_dipept_A-like"/>
</dbReference>
<dbReference type="InterPro" id="IPR005322">
    <property type="entry name" value="Peptidase_C69"/>
</dbReference>
<dbReference type="NCBIfam" id="NF033678">
    <property type="entry name" value="C69_fam_dipept"/>
    <property type="match status" value="1"/>
</dbReference>
<dbReference type="PANTHER" id="PTHR12994:SF17">
    <property type="entry name" value="LD30995P"/>
    <property type="match status" value="1"/>
</dbReference>
<dbReference type="PANTHER" id="PTHR12994">
    <property type="entry name" value="SECERNIN"/>
    <property type="match status" value="1"/>
</dbReference>
<dbReference type="Pfam" id="PF03577">
    <property type="entry name" value="Peptidase_C69"/>
    <property type="match status" value="1"/>
</dbReference>
<keyword id="KW-0224">Dipeptidase</keyword>
<keyword id="KW-0903">Direct protein sequencing</keyword>
<keyword id="KW-0378">Hydrolase</keyword>
<keyword id="KW-0645">Protease</keyword>
<keyword id="KW-1185">Reference proteome</keyword>
<evidence type="ECO:0000255" key="1"/>
<evidence type="ECO:0000269" key="2">
    <source>
    </source>
</evidence>
<evidence type="ECO:0000303" key="3">
    <source>
    </source>
</evidence>
<evidence type="ECO:0000305" key="4"/>
<evidence type="ECO:0000312" key="5">
    <source>
        <dbReference type="EMBL" id="AAN24310.1"/>
    </source>
</evidence>